<accession>A8LB08</accession>
<sequence>MARLSGVDLPREKRVEIALTYIFGIGRSRSRDTLAATGVNPDTRVRDLTDDEVQKLREWIDANYRVEGDLNREIKQDIRRKMEIGCYQGLRHRRNLPVHGQRTHTNARTRKGPRRAIAGKKKAGKK</sequence>
<dbReference type="EMBL" id="CP000820">
    <property type="protein sequence ID" value="ABW15369.1"/>
    <property type="molecule type" value="Genomic_DNA"/>
</dbReference>
<dbReference type="RefSeq" id="WP_018505109.1">
    <property type="nucleotide sequence ID" value="NC_009921.1"/>
</dbReference>
<dbReference type="SMR" id="A8LB08"/>
<dbReference type="STRING" id="298653.Franean1_6025"/>
<dbReference type="KEGG" id="fre:Franean1_6025"/>
<dbReference type="eggNOG" id="COG0099">
    <property type="taxonomic scope" value="Bacteria"/>
</dbReference>
<dbReference type="HOGENOM" id="CLU_103849_1_2_11"/>
<dbReference type="GO" id="GO:0005829">
    <property type="term" value="C:cytosol"/>
    <property type="evidence" value="ECO:0007669"/>
    <property type="project" value="TreeGrafter"/>
</dbReference>
<dbReference type="GO" id="GO:0015935">
    <property type="term" value="C:small ribosomal subunit"/>
    <property type="evidence" value="ECO:0007669"/>
    <property type="project" value="TreeGrafter"/>
</dbReference>
<dbReference type="GO" id="GO:0019843">
    <property type="term" value="F:rRNA binding"/>
    <property type="evidence" value="ECO:0007669"/>
    <property type="project" value="UniProtKB-UniRule"/>
</dbReference>
<dbReference type="GO" id="GO:0003735">
    <property type="term" value="F:structural constituent of ribosome"/>
    <property type="evidence" value="ECO:0007669"/>
    <property type="project" value="InterPro"/>
</dbReference>
<dbReference type="GO" id="GO:0000049">
    <property type="term" value="F:tRNA binding"/>
    <property type="evidence" value="ECO:0007669"/>
    <property type="project" value="UniProtKB-UniRule"/>
</dbReference>
<dbReference type="GO" id="GO:0006412">
    <property type="term" value="P:translation"/>
    <property type="evidence" value="ECO:0007669"/>
    <property type="project" value="UniProtKB-UniRule"/>
</dbReference>
<dbReference type="FunFam" id="1.10.8.50:FF:000001">
    <property type="entry name" value="30S ribosomal protein S13"/>
    <property type="match status" value="1"/>
</dbReference>
<dbReference type="FunFam" id="4.10.910.10:FF:000001">
    <property type="entry name" value="30S ribosomal protein S13"/>
    <property type="match status" value="1"/>
</dbReference>
<dbReference type="Gene3D" id="1.10.8.50">
    <property type="match status" value="1"/>
</dbReference>
<dbReference type="Gene3D" id="4.10.910.10">
    <property type="entry name" value="30s ribosomal protein s13, domain 2"/>
    <property type="match status" value="1"/>
</dbReference>
<dbReference type="HAMAP" id="MF_01315">
    <property type="entry name" value="Ribosomal_uS13"/>
    <property type="match status" value="1"/>
</dbReference>
<dbReference type="InterPro" id="IPR027437">
    <property type="entry name" value="Rbsml_uS13_C"/>
</dbReference>
<dbReference type="InterPro" id="IPR001892">
    <property type="entry name" value="Ribosomal_uS13"/>
</dbReference>
<dbReference type="InterPro" id="IPR010979">
    <property type="entry name" value="Ribosomal_uS13-like_H2TH"/>
</dbReference>
<dbReference type="InterPro" id="IPR019980">
    <property type="entry name" value="Ribosomal_uS13_bac-type"/>
</dbReference>
<dbReference type="InterPro" id="IPR018269">
    <property type="entry name" value="Ribosomal_uS13_CS"/>
</dbReference>
<dbReference type="NCBIfam" id="TIGR03631">
    <property type="entry name" value="uS13_bact"/>
    <property type="match status" value="1"/>
</dbReference>
<dbReference type="PANTHER" id="PTHR10871">
    <property type="entry name" value="30S RIBOSOMAL PROTEIN S13/40S RIBOSOMAL PROTEIN S18"/>
    <property type="match status" value="1"/>
</dbReference>
<dbReference type="PANTHER" id="PTHR10871:SF1">
    <property type="entry name" value="SMALL RIBOSOMAL SUBUNIT PROTEIN US13M"/>
    <property type="match status" value="1"/>
</dbReference>
<dbReference type="Pfam" id="PF00416">
    <property type="entry name" value="Ribosomal_S13"/>
    <property type="match status" value="1"/>
</dbReference>
<dbReference type="PIRSF" id="PIRSF002134">
    <property type="entry name" value="Ribosomal_S13"/>
    <property type="match status" value="1"/>
</dbReference>
<dbReference type="SUPFAM" id="SSF46946">
    <property type="entry name" value="S13-like H2TH domain"/>
    <property type="match status" value="1"/>
</dbReference>
<dbReference type="PROSITE" id="PS00646">
    <property type="entry name" value="RIBOSOMAL_S13_1"/>
    <property type="match status" value="1"/>
</dbReference>
<dbReference type="PROSITE" id="PS50159">
    <property type="entry name" value="RIBOSOMAL_S13_2"/>
    <property type="match status" value="1"/>
</dbReference>
<feature type="chain" id="PRO_1000141264" description="Small ribosomal subunit protein uS13">
    <location>
        <begin position="1"/>
        <end position="126"/>
    </location>
</feature>
<feature type="region of interest" description="Disordered" evidence="2">
    <location>
        <begin position="94"/>
        <end position="126"/>
    </location>
</feature>
<reference key="1">
    <citation type="journal article" date="2007" name="Genome Res.">
        <title>Genome characteristics of facultatively symbiotic Frankia sp. strains reflect host range and host plant biogeography.</title>
        <authorList>
            <person name="Normand P."/>
            <person name="Lapierre P."/>
            <person name="Tisa L.S."/>
            <person name="Gogarten J.P."/>
            <person name="Alloisio N."/>
            <person name="Bagnarol E."/>
            <person name="Bassi C.A."/>
            <person name="Berry A.M."/>
            <person name="Bickhart D.M."/>
            <person name="Choisne N."/>
            <person name="Couloux A."/>
            <person name="Cournoyer B."/>
            <person name="Cruveiller S."/>
            <person name="Daubin V."/>
            <person name="Demange N."/>
            <person name="Francino M.P."/>
            <person name="Goltsman E."/>
            <person name="Huang Y."/>
            <person name="Kopp O.R."/>
            <person name="Labarre L."/>
            <person name="Lapidus A."/>
            <person name="Lavire C."/>
            <person name="Marechal J."/>
            <person name="Martinez M."/>
            <person name="Mastronunzio J.E."/>
            <person name="Mullin B.C."/>
            <person name="Niemann J."/>
            <person name="Pujic P."/>
            <person name="Rawnsley T."/>
            <person name="Rouy Z."/>
            <person name="Schenowitz C."/>
            <person name="Sellstedt A."/>
            <person name="Tavares F."/>
            <person name="Tomkins J.P."/>
            <person name="Vallenet D."/>
            <person name="Valverde C."/>
            <person name="Wall L.G."/>
            <person name="Wang Y."/>
            <person name="Medigue C."/>
            <person name="Benson D.R."/>
        </authorList>
    </citation>
    <scope>NUCLEOTIDE SEQUENCE [LARGE SCALE GENOMIC DNA]</scope>
    <source>
        <strain>EAN1pec</strain>
    </source>
</reference>
<comment type="function">
    <text evidence="1">Located at the top of the head of the 30S subunit, it contacts several helices of the 16S rRNA. In the 70S ribosome it contacts the 23S rRNA (bridge B1a) and protein L5 of the 50S subunit (bridge B1b), connecting the 2 subunits; these bridges are implicated in subunit movement. Contacts the tRNAs in the A and P-sites.</text>
</comment>
<comment type="subunit">
    <text evidence="1">Part of the 30S ribosomal subunit. Forms a loose heterodimer with protein S19. Forms two bridges to the 50S subunit in the 70S ribosome.</text>
</comment>
<comment type="similarity">
    <text evidence="1">Belongs to the universal ribosomal protein uS13 family.</text>
</comment>
<name>RS13_PARS2</name>
<organism>
    <name type="scientific">Parafrankia sp. (strain EAN1pec)</name>
    <dbReference type="NCBI Taxonomy" id="298653"/>
    <lineage>
        <taxon>Bacteria</taxon>
        <taxon>Bacillati</taxon>
        <taxon>Actinomycetota</taxon>
        <taxon>Actinomycetes</taxon>
        <taxon>Frankiales</taxon>
        <taxon>Frankiaceae</taxon>
        <taxon>Parafrankia</taxon>
    </lineage>
</organism>
<evidence type="ECO:0000255" key="1">
    <source>
        <dbReference type="HAMAP-Rule" id="MF_01315"/>
    </source>
</evidence>
<evidence type="ECO:0000256" key="2">
    <source>
        <dbReference type="SAM" id="MobiDB-lite"/>
    </source>
</evidence>
<evidence type="ECO:0000305" key="3"/>
<proteinExistence type="inferred from homology"/>
<protein>
    <recommendedName>
        <fullName evidence="1">Small ribosomal subunit protein uS13</fullName>
    </recommendedName>
    <alternativeName>
        <fullName evidence="3">30S ribosomal protein S13</fullName>
    </alternativeName>
</protein>
<keyword id="KW-0687">Ribonucleoprotein</keyword>
<keyword id="KW-0689">Ribosomal protein</keyword>
<keyword id="KW-0694">RNA-binding</keyword>
<keyword id="KW-0699">rRNA-binding</keyword>
<keyword id="KW-0820">tRNA-binding</keyword>
<gene>
    <name evidence="1" type="primary">rpsM</name>
    <name type="ordered locus">Franean1_6025</name>
</gene>